<proteinExistence type="evidence at transcript level"/>
<protein>
    <recommendedName>
        <fullName>Taste receptor type 2 member 135</fullName>
        <shortName>T2R135</shortName>
    </recommendedName>
    <alternativeName>
        <fullName>Taste receptor type 2 member 35</fullName>
        <shortName>T2R35</shortName>
        <shortName>mT2r38</shortName>
    </alternativeName>
</protein>
<comment type="function">
    <text evidence="2">Putative taste receptor which may play a role in the perception of bitterness.</text>
</comment>
<comment type="subcellular location">
    <subcellularLocation>
        <location>Membrane</location>
        <topology>Multi-pass membrane protein</topology>
    </subcellularLocation>
</comment>
<comment type="miscellaneous">
    <text>Several bitter taste receptors are expressed in a single taste receptor cell.</text>
</comment>
<comment type="similarity">
    <text evidence="3">Belongs to the G-protein coupled receptor T2R family.</text>
</comment>
<comment type="sequence caution" evidence="3">
    <conflict type="erroneous gene model prediction">
        <sequence resource="EMBL-CDS" id="AAP40336"/>
    </conflict>
</comment>
<feature type="chain" id="PRO_0000082270" description="Taste receptor type 2 member 135">
    <location>
        <begin position="1"/>
        <end position="312"/>
    </location>
</feature>
<feature type="topological domain" description="Extracellular" evidence="1">
    <location>
        <begin position="1"/>
        <end position="19"/>
    </location>
</feature>
<feature type="transmembrane region" description="Helical; Name=1" evidence="1">
    <location>
        <begin position="20"/>
        <end position="40"/>
    </location>
</feature>
<feature type="topological domain" description="Cytoplasmic" evidence="1">
    <location>
        <begin position="41"/>
        <end position="66"/>
    </location>
</feature>
<feature type="transmembrane region" description="Helical; Name=2" evidence="1">
    <location>
        <begin position="67"/>
        <end position="87"/>
    </location>
</feature>
<feature type="topological domain" description="Extracellular" evidence="1">
    <location>
        <begin position="88"/>
        <end position="97"/>
    </location>
</feature>
<feature type="transmembrane region" description="Helical; Name=3" evidence="1">
    <location>
        <begin position="98"/>
        <end position="118"/>
    </location>
</feature>
<feature type="topological domain" description="Cytoplasmic" evidence="1">
    <location>
        <begin position="119"/>
        <end position="140"/>
    </location>
</feature>
<feature type="transmembrane region" description="Helical; Name=4" evidence="1">
    <location>
        <begin position="141"/>
        <end position="161"/>
    </location>
</feature>
<feature type="topological domain" description="Extracellular" evidence="1">
    <location>
        <begin position="162"/>
        <end position="198"/>
    </location>
</feature>
<feature type="transmembrane region" description="Helical; Name=5" evidence="1">
    <location>
        <begin position="199"/>
        <end position="219"/>
    </location>
</feature>
<feature type="topological domain" description="Cytoplasmic" evidence="1">
    <location>
        <begin position="220"/>
        <end position="244"/>
    </location>
</feature>
<feature type="transmembrane region" description="Helical; Name=6" evidence="1">
    <location>
        <begin position="245"/>
        <end position="265"/>
    </location>
</feature>
<feature type="topological domain" description="Extracellular" evidence="1">
    <location>
        <begin position="266"/>
        <end position="277"/>
    </location>
</feature>
<feature type="transmembrane region" description="Helical; Name=7" evidence="1">
    <location>
        <begin position="278"/>
        <end position="298"/>
    </location>
</feature>
<feature type="topological domain" description="Cytoplasmic" evidence="1">
    <location>
        <begin position="299"/>
        <end position="312"/>
    </location>
</feature>
<feature type="glycosylation site" description="N-linked (GlcNAc...) asparagine" evidence="1">
    <location>
        <position position="179"/>
    </location>
</feature>
<reference evidence="4" key="1">
    <citation type="journal article" date="2003" name="Physiol. Genomics">
        <title>Evolutionary relationships of the Tas2r receptor gene families in mouse and human.</title>
        <authorList>
            <person name="Conte C."/>
            <person name="Ebeling M."/>
            <person name="Marcuz A."/>
            <person name="Nef P."/>
            <person name="Andres-Barquin P.J."/>
        </authorList>
    </citation>
    <scope>NUCLEOTIDE SEQUENCE [GENOMIC DNA]</scope>
    <source>
        <strain evidence="4">C57BL/6J</strain>
    </source>
</reference>
<reference key="2">
    <citation type="journal article" date="2009" name="PLoS Biol.">
        <title>Lineage-specific biology revealed by a finished genome assembly of the mouse.</title>
        <authorList>
            <person name="Church D.M."/>
            <person name="Goodstadt L."/>
            <person name="Hillier L.W."/>
            <person name="Zody M.C."/>
            <person name="Goldstein S."/>
            <person name="She X."/>
            <person name="Bult C.J."/>
            <person name="Agarwala R."/>
            <person name="Cherry J.L."/>
            <person name="DiCuccio M."/>
            <person name="Hlavina W."/>
            <person name="Kapustin Y."/>
            <person name="Meric P."/>
            <person name="Maglott D."/>
            <person name="Birtle Z."/>
            <person name="Marques A.C."/>
            <person name="Graves T."/>
            <person name="Zhou S."/>
            <person name="Teague B."/>
            <person name="Potamousis K."/>
            <person name="Churas C."/>
            <person name="Place M."/>
            <person name="Herschleb J."/>
            <person name="Runnheim R."/>
            <person name="Forrest D."/>
            <person name="Amos-Landgraf J."/>
            <person name="Schwartz D.C."/>
            <person name="Cheng Z."/>
            <person name="Lindblad-Toh K."/>
            <person name="Eichler E.E."/>
            <person name="Ponting C.P."/>
        </authorList>
    </citation>
    <scope>NUCLEOTIDE SEQUENCE [LARGE SCALE GENOMIC DNA]</scope>
    <source>
        <strain>C57BL/6J</strain>
    </source>
</reference>
<reference key="3">
    <citation type="journal article" date="2004" name="Genome Res.">
        <title>The status, quality, and expansion of the NIH full-length cDNA project: the Mammalian Gene Collection (MGC).</title>
        <authorList>
            <consortium name="The MGC Project Team"/>
        </authorList>
    </citation>
    <scope>NUCLEOTIDE SEQUENCE [LARGE SCALE MRNA]</scope>
</reference>
<reference evidence="3" key="4">
    <citation type="journal article" date="2003" name="Mol. Biol. Evol.">
        <title>Adaptive diversification of bitter taste receptor genes in mammalian evolution.</title>
        <authorList>
            <person name="Shi P."/>
            <person name="Zhang J."/>
            <person name="Yang H."/>
            <person name="Zhang Y.-P."/>
        </authorList>
    </citation>
    <scope>IDENTIFICATION</scope>
</reference>
<accession>Q7TQA9</accession>
<accession>A4FUQ3</accession>
<accession>Q7M705</accession>
<name>TR135_MOUSE</name>
<sequence length="312" mass="35591">MSTGHTVLGCQTTDKTVVTLFIILVLLCLVAVVGNGFIIIALGMKWLLRRTLSAHNKLLISLAASRFCLQCVVIGKNIYVFLNPTSFPYNPVIQLLNLMWDFLTAATIWLCSLLGFFYCVKIATLTHPVFVWLKYRLPGWVPWMLLSAVGMSSLTSILCFIGNYMIYQNHAKSGHQPWNVTGNSLRHSLEKFYFFSIKIIMWTIPTVVFSIFMSLLLVSLVRHMKKTFLALSELRDVWAQAHFKALLPLLSFIVLFISCFLTLVLSSASNTPYQEFRYWMWQVVIHLCTVIHPIVILFSNPVLRVVIKRGCC</sequence>
<gene>
    <name type="primary">Tas2r135</name>
    <name type="synonym">T2r38</name>
    <name type="synonym">Tas2r35</name>
</gene>
<evidence type="ECO:0000255" key="1"/>
<evidence type="ECO:0000303" key="2">
    <source>
    </source>
</evidence>
<evidence type="ECO:0000305" key="3"/>
<evidence type="ECO:0000312" key="4">
    <source>
        <dbReference type="EMBL" id="AAP40336.1"/>
    </source>
</evidence>
<dbReference type="EMBL" id="AF532786">
    <property type="protein sequence ID" value="AAP40336.1"/>
    <property type="status" value="ALT_SEQ"/>
    <property type="molecule type" value="Genomic_DNA"/>
</dbReference>
<dbReference type="EMBL" id="AC153022">
    <property type="status" value="NOT_ANNOTATED_CDS"/>
    <property type="molecule type" value="Genomic_DNA"/>
</dbReference>
<dbReference type="EMBL" id="BC115532">
    <property type="protein sequence ID" value="AAI15533.1"/>
    <property type="molecule type" value="mRNA"/>
</dbReference>
<dbReference type="EMBL" id="BC115533">
    <property type="protein sequence ID" value="AAI15534.1"/>
    <property type="molecule type" value="mRNA"/>
</dbReference>
<dbReference type="EMBL" id="BK001097">
    <property type="protein sequence ID" value="DAA01236.1"/>
    <property type="molecule type" value="Genomic_DNA"/>
</dbReference>
<dbReference type="RefSeq" id="NP_954610.1">
    <property type="nucleotide sequence ID" value="NM_199159.1"/>
</dbReference>
<dbReference type="SMR" id="Q7TQA9"/>
<dbReference type="FunCoup" id="Q7TQA9">
    <property type="interactions" value="562"/>
</dbReference>
<dbReference type="STRING" id="10090.ENSMUSP00000070247"/>
<dbReference type="GlyCosmos" id="Q7TQA9">
    <property type="glycosylation" value="1 site, No reported glycans"/>
</dbReference>
<dbReference type="GlyGen" id="Q7TQA9">
    <property type="glycosylation" value="1 site"/>
</dbReference>
<dbReference type="PhosphoSitePlus" id="Q7TQA9"/>
<dbReference type="PaxDb" id="10090-ENSMUSP00000070247"/>
<dbReference type="DNASU" id="387512"/>
<dbReference type="GeneID" id="387512"/>
<dbReference type="KEGG" id="mmu:387512"/>
<dbReference type="AGR" id="MGI:2681302"/>
<dbReference type="CTD" id="387512"/>
<dbReference type="MGI" id="MGI:2681302">
    <property type="gene designation" value="Tas2r135"/>
</dbReference>
<dbReference type="eggNOG" id="ENOG502S2SI">
    <property type="taxonomic scope" value="Eukaryota"/>
</dbReference>
<dbReference type="InParanoid" id="Q7TQA9"/>
<dbReference type="OrthoDB" id="9836876at2759"/>
<dbReference type="PhylomeDB" id="Q7TQA9"/>
<dbReference type="Reactome" id="R-MMU-418594">
    <property type="pathway name" value="G alpha (i) signalling events"/>
</dbReference>
<dbReference type="Reactome" id="R-MMU-420499">
    <property type="pathway name" value="Class C/3 (Metabotropic glutamate/pheromone receptors)"/>
</dbReference>
<dbReference type="BioGRID-ORCS" id="387512">
    <property type="hits" value="2 hits in 75 CRISPR screens"/>
</dbReference>
<dbReference type="PRO" id="PR:Q7TQA9"/>
<dbReference type="Proteomes" id="UP000000589">
    <property type="component" value="Unplaced"/>
</dbReference>
<dbReference type="RNAct" id="Q7TQA9">
    <property type="molecule type" value="protein"/>
</dbReference>
<dbReference type="GO" id="GO:0016020">
    <property type="term" value="C:membrane"/>
    <property type="evidence" value="ECO:0000303"/>
    <property type="project" value="UniProtKB"/>
</dbReference>
<dbReference type="GO" id="GO:0033038">
    <property type="term" value="F:bitter taste receptor activity"/>
    <property type="evidence" value="ECO:0007669"/>
    <property type="project" value="InterPro"/>
</dbReference>
<dbReference type="GO" id="GO:0004930">
    <property type="term" value="F:G protein-coupled receptor activity"/>
    <property type="evidence" value="ECO:0007669"/>
    <property type="project" value="UniProtKB-KW"/>
</dbReference>
<dbReference type="GO" id="GO:0008527">
    <property type="term" value="F:taste receptor activity"/>
    <property type="evidence" value="ECO:0000303"/>
    <property type="project" value="UniProtKB"/>
</dbReference>
<dbReference type="GO" id="GO:0001580">
    <property type="term" value="P:detection of chemical stimulus involved in sensory perception of bitter taste"/>
    <property type="evidence" value="ECO:0000303"/>
    <property type="project" value="UniProtKB"/>
</dbReference>
<dbReference type="CDD" id="cd15018">
    <property type="entry name" value="7tm_TAS2R41-like"/>
    <property type="match status" value="1"/>
</dbReference>
<dbReference type="FunFam" id="1.20.1070.10:FF:000055">
    <property type="entry name" value="Taste receptor type 2"/>
    <property type="match status" value="1"/>
</dbReference>
<dbReference type="Gene3D" id="1.20.1070.10">
    <property type="entry name" value="Rhodopsin 7-helix transmembrane proteins"/>
    <property type="match status" value="1"/>
</dbReference>
<dbReference type="InterPro" id="IPR007960">
    <property type="entry name" value="TAS2R"/>
</dbReference>
<dbReference type="PANTHER" id="PTHR11394">
    <property type="entry name" value="TASTE RECEPTOR TYPE 2"/>
    <property type="match status" value="1"/>
</dbReference>
<dbReference type="PANTHER" id="PTHR11394:SF32">
    <property type="entry name" value="TASTE RECEPTOR TYPE 2 MEMBER 60"/>
    <property type="match status" value="1"/>
</dbReference>
<dbReference type="Pfam" id="PF05296">
    <property type="entry name" value="TAS2R"/>
    <property type="match status" value="1"/>
</dbReference>
<dbReference type="SUPFAM" id="SSF81321">
    <property type="entry name" value="Family A G protein-coupled receptor-like"/>
    <property type="match status" value="1"/>
</dbReference>
<organism evidence="4">
    <name type="scientific">Mus musculus</name>
    <name type="common">Mouse</name>
    <dbReference type="NCBI Taxonomy" id="10090"/>
    <lineage>
        <taxon>Eukaryota</taxon>
        <taxon>Metazoa</taxon>
        <taxon>Chordata</taxon>
        <taxon>Craniata</taxon>
        <taxon>Vertebrata</taxon>
        <taxon>Euteleostomi</taxon>
        <taxon>Mammalia</taxon>
        <taxon>Eutheria</taxon>
        <taxon>Euarchontoglires</taxon>
        <taxon>Glires</taxon>
        <taxon>Rodentia</taxon>
        <taxon>Myomorpha</taxon>
        <taxon>Muroidea</taxon>
        <taxon>Muridae</taxon>
        <taxon>Murinae</taxon>
        <taxon>Mus</taxon>
        <taxon>Mus</taxon>
    </lineage>
</organism>
<keyword id="KW-0297">G-protein coupled receptor</keyword>
<keyword id="KW-0325">Glycoprotein</keyword>
<keyword id="KW-0472">Membrane</keyword>
<keyword id="KW-0675">Receptor</keyword>
<keyword id="KW-1185">Reference proteome</keyword>
<keyword id="KW-0716">Sensory transduction</keyword>
<keyword id="KW-0919">Taste</keyword>
<keyword id="KW-0807">Transducer</keyword>
<keyword id="KW-0812">Transmembrane</keyword>
<keyword id="KW-1133">Transmembrane helix</keyword>